<comment type="function">
    <text evidence="1">One of the primary rRNA binding proteins, it binds specifically to the 5'-end of 16S ribosomal RNA.</text>
</comment>
<comment type="subunit">
    <text evidence="1">Part of the 30S ribosomal subunit.</text>
</comment>
<comment type="similarity">
    <text evidence="1">Belongs to the universal ribosomal protein uS17 family.</text>
</comment>
<feature type="chain" id="PRO_0000233506" description="Small ribosomal subunit protein uS17">
    <location>
        <begin position="1"/>
        <end position="84"/>
    </location>
</feature>
<protein>
    <recommendedName>
        <fullName evidence="1">Small ribosomal subunit protein uS17</fullName>
    </recommendedName>
    <alternativeName>
        <fullName evidence="2">30S ribosomal protein S17</fullName>
    </alternativeName>
</protein>
<gene>
    <name evidence="1" type="primary">rpsQ</name>
    <name type="ordered locus">Moth_2451</name>
</gene>
<organism>
    <name type="scientific">Moorella thermoacetica (strain ATCC 39073 / JCM 9320)</name>
    <dbReference type="NCBI Taxonomy" id="264732"/>
    <lineage>
        <taxon>Bacteria</taxon>
        <taxon>Bacillati</taxon>
        <taxon>Bacillota</taxon>
        <taxon>Clostridia</taxon>
        <taxon>Moorellales</taxon>
        <taxon>Moorellaceae</taxon>
        <taxon>Moorella</taxon>
    </lineage>
</organism>
<keyword id="KW-0687">Ribonucleoprotein</keyword>
<keyword id="KW-0689">Ribosomal protein</keyword>
<keyword id="KW-0694">RNA-binding</keyword>
<keyword id="KW-0699">rRNA-binding</keyword>
<proteinExistence type="inferred from homology"/>
<evidence type="ECO:0000255" key="1">
    <source>
        <dbReference type="HAMAP-Rule" id="MF_01345"/>
    </source>
</evidence>
<evidence type="ECO:0000305" key="2"/>
<sequence length="84" mass="10156">MERNYRKTRVGSVVSDKMDKTVVVAVEDRVRHPLLNKIIRHTRKFKAHDEKNECRIGDKVRIMETRPLSKEKRWRVVEIMERAR</sequence>
<reference key="1">
    <citation type="journal article" date="2008" name="Environ. Microbiol.">
        <title>The complete genome sequence of Moorella thermoacetica (f. Clostridium thermoaceticum).</title>
        <authorList>
            <person name="Pierce E."/>
            <person name="Xie G."/>
            <person name="Barabote R.D."/>
            <person name="Saunders E."/>
            <person name="Han C.S."/>
            <person name="Detter J.C."/>
            <person name="Richardson P."/>
            <person name="Brettin T.S."/>
            <person name="Das A."/>
            <person name="Ljungdahl L.G."/>
            <person name="Ragsdale S.W."/>
        </authorList>
    </citation>
    <scope>NUCLEOTIDE SEQUENCE [LARGE SCALE GENOMIC DNA]</scope>
    <source>
        <strain>ATCC 39073 / JCM 9320</strain>
    </source>
</reference>
<accession>Q2RFQ6</accession>
<name>RS17_MOOTA</name>
<dbReference type="EMBL" id="CP000232">
    <property type="protein sequence ID" value="ABC20733.1"/>
    <property type="molecule type" value="Genomic_DNA"/>
</dbReference>
<dbReference type="RefSeq" id="YP_431276.1">
    <property type="nucleotide sequence ID" value="NC_007644.1"/>
</dbReference>
<dbReference type="SMR" id="Q2RFQ6"/>
<dbReference type="STRING" id="264732.Moth_2451"/>
<dbReference type="EnsemblBacteria" id="ABC20733">
    <property type="protein sequence ID" value="ABC20733"/>
    <property type="gene ID" value="Moth_2451"/>
</dbReference>
<dbReference type="KEGG" id="mta:Moth_2451"/>
<dbReference type="PATRIC" id="fig|264732.11.peg.2669"/>
<dbReference type="eggNOG" id="COG0186">
    <property type="taxonomic scope" value="Bacteria"/>
</dbReference>
<dbReference type="HOGENOM" id="CLU_073626_1_0_9"/>
<dbReference type="OrthoDB" id="9811714at2"/>
<dbReference type="GO" id="GO:0022627">
    <property type="term" value="C:cytosolic small ribosomal subunit"/>
    <property type="evidence" value="ECO:0007669"/>
    <property type="project" value="TreeGrafter"/>
</dbReference>
<dbReference type="GO" id="GO:0019843">
    <property type="term" value="F:rRNA binding"/>
    <property type="evidence" value="ECO:0007669"/>
    <property type="project" value="UniProtKB-UniRule"/>
</dbReference>
<dbReference type="GO" id="GO:0003735">
    <property type="term" value="F:structural constituent of ribosome"/>
    <property type="evidence" value="ECO:0007669"/>
    <property type="project" value="InterPro"/>
</dbReference>
<dbReference type="GO" id="GO:0006412">
    <property type="term" value="P:translation"/>
    <property type="evidence" value="ECO:0007669"/>
    <property type="project" value="UniProtKB-UniRule"/>
</dbReference>
<dbReference type="CDD" id="cd00364">
    <property type="entry name" value="Ribosomal_uS17"/>
    <property type="match status" value="1"/>
</dbReference>
<dbReference type="FunFam" id="2.40.50.140:FF:000123">
    <property type="entry name" value="30S ribosomal protein S17"/>
    <property type="match status" value="1"/>
</dbReference>
<dbReference type="Gene3D" id="2.40.50.140">
    <property type="entry name" value="Nucleic acid-binding proteins"/>
    <property type="match status" value="1"/>
</dbReference>
<dbReference type="HAMAP" id="MF_01345_B">
    <property type="entry name" value="Ribosomal_uS17_B"/>
    <property type="match status" value="1"/>
</dbReference>
<dbReference type="InterPro" id="IPR012340">
    <property type="entry name" value="NA-bd_OB-fold"/>
</dbReference>
<dbReference type="InterPro" id="IPR000266">
    <property type="entry name" value="Ribosomal_uS17"/>
</dbReference>
<dbReference type="InterPro" id="IPR019984">
    <property type="entry name" value="Ribosomal_uS17_bact/chlr"/>
</dbReference>
<dbReference type="InterPro" id="IPR019979">
    <property type="entry name" value="Ribosomal_uS17_CS"/>
</dbReference>
<dbReference type="NCBIfam" id="NF004123">
    <property type="entry name" value="PRK05610.1"/>
    <property type="match status" value="1"/>
</dbReference>
<dbReference type="NCBIfam" id="TIGR03635">
    <property type="entry name" value="uS17_bact"/>
    <property type="match status" value="1"/>
</dbReference>
<dbReference type="PANTHER" id="PTHR10744">
    <property type="entry name" value="40S RIBOSOMAL PROTEIN S11 FAMILY MEMBER"/>
    <property type="match status" value="1"/>
</dbReference>
<dbReference type="PANTHER" id="PTHR10744:SF1">
    <property type="entry name" value="SMALL RIBOSOMAL SUBUNIT PROTEIN US17M"/>
    <property type="match status" value="1"/>
</dbReference>
<dbReference type="Pfam" id="PF00366">
    <property type="entry name" value="Ribosomal_S17"/>
    <property type="match status" value="1"/>
</dbReference>
<dbReference type="PRINTS" id="PR00973">
    <property type="entry name" value="RIBOSOMALS17"/>
</dbReference>
<dbReference type="SUPFAM" id="SSF50249">
    <property type="entry name" value="Nucleic acid-binding proteins"/>
    <property type="match status" value="1"/>
</dbReference>
<dbReference type="PROSITE" id="PS00056">
    <property type="entry name" value="RIBOSOMAL_S17"/>
    <property type="match status" value="1"/>
</dbReference>